<comment type="function">
    <text evidence="4">Probably a transglycosylase. Probably involved in synthesis of the outer membrane receptor for a cellular contact-dependent growth inhibition (CDI) system.</text>
</comment>
<comment type="disruption phenotype">
    <text evidence="1">Disruption confers resistance to cellular contact-dependent growth inhibition (CDI) CdiA-2 of B.pseudomallei strain 1026b, but not to endogenous CdiA. Alters lipopolysaccharide structure, decreased binding to B.pseudomallei strain 1026b inhibitor cells.</text>
</comment>
<comment type="similarity">
    <text evidence="3">Belongs to the glycosyltransferase group 1 family. Glycosyltransferase 4 subfamily.</text>
</comment>
<sequence>MTIGLSCNALKYGGGLERYAIDLARGLADAGVRPLVFARSFDSSVPEYQCVEPRRINVSFLPGKCRDAWFSWRLRAARRAAPVDVLIGCNRVDSSDIAICGGTHLGFLDAIGRMPTFSDRRQIALERRQYARARFVVAHSMLMRDELRRFYGLSDDKIRVLFPPVDAARFTPVDAVRRAELRTRFGFADDEVVLLFPSSSHERKGLPLIEAILRDAGPRVVVAVAGRPPERTSERLRYVGYVKDIEDGYRAADFTILASKYEPFGLVGVESVMCGTPVILPSNIGCCDAIAPSAKLVFAPGDAAGLRGMLDEAVRRVRAGAVRVESGAAARAAIQYDPSVARHVAQLLDLAAEAASDRRNGGR</sequence>
<keyword id="KW-0328">Glycosyltransferase</keyword>
<keyword id="KW-0808">Transferase</keyword>
<accession>Q2SZV9</accession>
<reference key="1">
    <citation type="journal article" date="2005" name="BMC Genomics">
        <title>Bacterial genome adaptation to niches: divergence of the potential virulence genes in three Burkholderia species of different survival strategies.</title>
        <authorList>
            <person name="Kim H.S."/>
            <person name="Schell M.A."/>
            <person name="Yu Y."/>
            <person name="Ulrich R.L."/>
            <person name="Sarria S.H."/>
            <person name="Nierman W.C."/>
            <person name="DeShazer D."/>
        </authorList>
    </citation>
    <scope>NUCLEOTIDE SEQUENCE [LARGE SCALE GENOMIC DNA]</scope>
    <source>
        <strain>ATCC 700388 / DSM 13276 / CCUG 48851 / CIP 106301 / E264</strain>
    </source>
</reference>
<reference key="2">
    <citation type="journal article" date="2015" name="PLoS ONE">
        <title>Genetic analysis of the CDI pathway from Burkholderia pseudomallei 1026b.</title>
        <authorList>
            <person name="Koskiniemi S."/>
            <person name="Garza-Sanchez F."/>
            <person name="Edman N."/>
            <person name="Chaudhuri S."/>
            <person name="Poole S.J."/>
            <person name="Manoil C."/>
            <person name="Hayes C.S."/>
            <person name="Low D.A."/>
        </authorList>
    </citation>
    <scope>FUNCTION</scope>
    <scope>DISRUPTION PHENOTYPE</scope>
    <source>
        <strain>ATCC 700388 / DSM 13276 / CCUG 48851 / CIP 106301 / E264</strain>
    </source>
</reference>
<gene>
    <name type="ordered locus">BTH_I0986</name>
</gene>
<feature type="chain" id="PRO_0000446877" description="Probable transglycosylase BTH_I0986">
    <location>
        <begin position="1"/>
        <end position="363"/>
    </location>
</feature>
<protein>
    <recommendedName>
        <fullName evidence="2">Probable transglycosylase BTH_I0986</fullName>
        <ecNumber>2.4.-.-</ecNumber>
    </recommendedName>
</protein>
<name>Y986_BURTA</name>
<dbReference type="EC" id="2.4.-.-"/>
<dbReference type="EMBL" id="CP000086">
    <property type="protein sequence ID" value="ABC36447.1"/>
    <property type="molecule type" value="Genomic_DNA"/>
</dbReference>
<dbReference type="RefSeq" id="WP_009892326.1">
    <property type="nucleotide sequence ID" value="NZ_CP008785.1"/>
</dbReference>
<dbReference type="SMR" id="Q2SZV9"/>
<dbReference type="CAZy" id="GT4">
    <property type="family name" value="Glycosyltransferase Family 4"/>
</dbReference>
<dbReference type="DNASU" id="3847095"/>
<dbReference type="GeneID" id="45120740"/>
<dbReference type="KEGG" id="bte:BTH_I0986"/>
<dbReference type="HOGENOM" id="CLU_068046_0_0_4"/>
<dbReference type="Proteomes" id="UP000001930">
    <property type="component" value="Chromosome I"/>
</dbReference>
<dbReference type="GO" id="GO:0016757">
    <property type="term" value="F:glycosyltransferase activity"/>
    <property type="evidence" value="ECO:0007669"/>
    <property type="project" value="UniProtKB-KW"/>
</dbReference>
<dbReference type="CDD" id="cd03801">
    <property type="entry name" value="GT4_PimA-like"/>
    <property type="match status" value="1"/>
</dbReference>
<dbReference type="Gene3D" id="3.40.50.2000">
    <property type="entry name" value="Glycogen Phosphorylase B"/>
    <property type="match status" value="2"/>
</dbReference>
<dbReference type="InterPro" id="IPR001296">
    <property type="entry name" value="Glyco_trans_1"/>
</dbReference>
<dbReference type="InterPro" id="IPR028098">
    <property type="entry name" value="Glyco_trans_4-like_N"/>
</dbReference>
<dbReference type="PANTHER" id="PTHR12526:SF510">
    <property type="entry name" value="D-INOSITOL 3-PHOSPHATE GLYCOSYLTRANSFERASE"/>
    <property type="match status" value="1"/>
</dbReference>
<dbReference type="PANTHER" id="PTHR12526">
    <property type="entry name" value="GLYCOSYLTRANSFERASE"/>
    <property type="match status" value="1"/>
</dbReference>
<dbReference type="Pfam" id="PF13439">
    <property type="entry name" value="Glyco_transf_4"/>
    <property type="match status" value="1"/>
</dbReference>
<dbReference type="Pfam" id="PF00534">
    <property type="entry name" value="Glycos_transf_1"/>
    <property type="match status" value="1"/>
</dbReference>
<dbReference type="SUPFAM" id="SSF53756">
    <property type="entry name" value="UDP-Glycosyltransferase/glycogen phosphorylase"/>
    <property type="match status" value="1"/>
</dbReference>
<organism>
    <name type="scientific">Burkholderia thailandensis (strain ATCC 700388 / DSM 13276 / CCUG 48851 / CIP 106301 / E264)</name>
    <dbReference type="NCBI Taxonomy" id="271848"/>
    <lineage>
        <taxon>Bacteria</taxon>
        <taxon>Pseudomonadati</taxon>
        <taxon>Pseudomonadota</taxon>
        <taxon>Betaproteobacteria</taxon>
        <taxon>Burkholderiales</taxon>
        <taxon>Burkholderiaceae</taxon>
        <taxon>Burkholderia</taxon>
        <taxon>pseudomallei group</taxon>
    </lineage>
</organism>
<proteinExistence type="inferred from homology"/>
<evidence type="ECO:0000269" key="1">
    <source>
    </source>
</evidence>
<evidence type="ECO:0000303" key="2">
    <source>
    </source>
</evidence>
<evidence type="ECO:0000305" key="3"/>
<evidence type="ECO:0000305" key="4">
    <source>
    </source>
</evidence>